<reference key="1">
    <citation type="journal article" date="1998" name="DNA Res.">
        <title>Sequence analysis of the Bacillus subtilis 168 chromosome region between the sspC and odhA loci (184 degrees-180 degrees).</title>
        <authorList>
            <person name="Ghim S.-Y."/>
            <person name="Choi S.-K."/>
            <person name="Shin B.-S."/>
            <person name="Jeong Y.-M."/>
            <person name="Sorokin A."/>
            <person name="Ehrlich S.D."/>
            <person name="Park S.-H."/>
        </authorList>
    </citation>
    <scope>NUCLEOTIDE SEQUENCE [GENOMIC DNA]</scope>
    <source>
        <strain>168</strain>
    </source>
</reference>
<reference key="2">
    <citation type="journal article" date="1997" name="Nature">
        <title>The complete genome sequence of the Gram-positive bacterium Bacillus subtilis.</title>
        <authorList>
            <person name="Kunst F."/>
            <person name="Ogasawara N."/>
            <person name="Moszer I."/>
            <person name="Albertini A.M."/>
            <person name="Alloni G."/>
            <person name="Azevedo V."/>
            <person name="Bertero M.G."/>
            <person name="Bessieres P."/>
            <person name="Bolotin A."/>
            <person name="Borchert S."/>
            <person name="Borriss R."/>
            <person name="Boursier L."/>
            <person name="Brans A."/>
            <person name="Braun M."/>
            <person name="Brignell S.C."/>
            <person name="Bron S."/>
            <person name="Brouillet S."/>
            <person name="Bruschi C.V."/>
            <person name="Caldwell B."/>
            <person name="Capuano V."/>
            <person name="Carter N.M."/>
            <person name="Choi S.-K."/>
            <person name="Codani J.-J."/>
            <person name="Connerton I.F."/>
            <person name="Cummings N.J."/>
            <person name="Daniel R.A."/>
            <person name="Denizot F."/>
            <person name="Devine K.M."/>
            <person name="Duesterhoeft A."/>
            <person name="Ehrlich S.D."/>
            <person name="Emmerson P.T."/>
            <person name="Entian K.-D."/>
            <person name="Errington J."/>
            <person name="Fabret C."/>
            <person name="Ferrari E."/>
            <person name="Foulger D."/>
            <person name="Fritz C."/>
            <person name="Fujita M."/>
            <person name="Fujita Y."/>
            <person name="Fuma S."/>
            <person name="Galizzi A."/>
            <person name="Galleron N."/>
            <person name="Ghim S.-Y."/>
            <person name="Glaser P."/>
            <person name="Goffeau A."/>
            <person name="Golightly E.J."/>
            <person name="Grandi G."/>
            <person name="Guiseppi G."/>
            <person name="Guy B.J."/>
            <person name="Haga K."/>
            <person name="Haiech J."/>
            <person name="Harwood C.R."/>
            <person name="Henaut A."/>
            <person name="Hilbert H."/>
            <person name="Holsappel S."/>
            <person name="Hosono S."/>
            <person name="Hullo M.-F."/>
            <person name="Itaya M."/>
            <person name="Jones L.-M."/>
            <person name="Joris B."/>
            <person name="Karamata D."/>
            <person name="Kasahara Y."/>
            <person name="Klaerr-Blanchard M."/>
            <person name="Klein C."/>
            <person name="Kobayashi Y."/>
            <person name="Koetter P."/>
            <person name="Koningstein G."/>
            <person name="Krogh S."/>
            <person name="Kumano M."/>
            <person name="Kurita K."/>
            <person name="Lapidus A."/>
            <person name="Lardinois S."/>
            <person name="Lauber J."/>
            <person name="Lazarevic V."/>
            <person name="Lee S.-M."/>
            <person name="Levine A."/>
            <person name="Liu H."/>
            <person name="Masuda S."/>
            <person name="Mauel C."/>
            <person name="Medigue C."/>
            <person name="Medina N."/>
            <person name="Mellado R.P."/>
            <person name="Mizuno M."/>
            <person name="Moestl D."/>
            <person name="Nakai S."/>
            <person name="Noback M."/>
            <person name="Noone D."/>
            <person name="O'Reilly M."/>
            <person name="Ogawa K."/>
            <person name="Ogiwara A."/>
            <person name="Oudega B."/>
            <person name="Park S.-H."/>
            <person name="Parro V."/>
            <person name="Pohl T.M."/>
            <person name="Portetelle D."/>
            <person name="Porwollik S."/>
            <person name="Prescott A.M."/>
            <person name="Presecan E."/>
            <person name="Pujic P."/>
            <person name="Purnelle B."/>
            <person name="Rapoport G."/>
            <person name="Rey M."/>
            <person name="Reynolds S."/>
            <person name="Rieger M."/>
            <person name="Rivolta C."/>
            <person name="Rocha E."/>
            <person name="Roche B."/>
            <person name="Rose M."/>
            <person name="Sadaie Y."/>
            <person name="Sato T."/>
            <person name="Scanlan E."/>
            <person name="Schleich S."/>
            <person name="Schroeter R."/>
            <person name="Scoffone F."/>
            <person name="Sekiguchi J."/>
            <person name="Sekowska A."/>
            <person name="Seror S.J."/>
            <person name="Serror P."/>
            <person name="Shin B.-S."/>
            <person name="Soldo B."/>
            <person name="Sorokin A."/>
            <person name="Tacconi E."/>
            <person name="Takagi T."/>
            <person name="Takahashi H."/>
            <person name="Takemaru K."/>
            <person name="Takeuchi M."/>
            <person name="Tamakoshi A."/>
            <person name="Tanaka T."/>
            <person name="Terpstra P."/>
            <person name="Tognoni A."/>
            <person name="Tosato V."/>
            <person name="Uchiyama S."/>
            <person name="Vandenbol M."/>
            <person name="Vannier F."/>
            <person name="Vassarotti A."/>
            <person name="Viari A."/>
            <person name="Wambutt R."/>
            <person name="Wedler E."/>
            <person name="Wedler H."/>
            <person name="Weitzenegger T."/>
            <person name="Winters P."/>
            <person name="Wipat A."/>
            <person name="Yamamoto H."/>
            <person name="Yamane K."/>
            <person name="Yasumoto K."/>
            <person name="Yata K."/>
            <person name="Yoshida K."/>
            <person name="Yoshikawa H.-F."/>
            <person name="Zumstein E."/>
            <person name="Yoshikawa H."/>
            <person name="Danchin A."/>
        </authorList>
    </citation>
    <scope>NUCLEOTIDE SEQUENCE [LARGE SCALE GENOMIC DNA]</scope>
    <source>
        <strain>168</strain>
    </source>
</reference>
<reference key="3">
    <citation type="journal article" date="2004" name="Microbiol. Mol. Biol. Rev.">
        <title>Proteomics of protein secretion by Bacillus subtilis: separating the 'secrets' of the secretome.</title>
        <authorList>
            <person name="Tjalsma H."/>
            <person name="Antelmann H."/>
            <person name="Jongbloed J.D.H."/>
            <person name="Braun P.G."/>
            <person name="Darmon E."/>
            <person name="Dorenbos R."/>
            <person name="Dubois J.-Y.F."/>
            <person name="Westers H."/>
            <person name="Zanen G."/>
            <person name="Quax W.J."/>
            <person name="Kuipers O.P."/>
            <person name="Bron S."/>
            <person name="Hecker M."/>
            <person name="van Dijl J.M."/>
        </authorList>
    </citation>
    <scope>SUBCELLULAR LOCATION</scope>
    <source>
        <strain>168</strain>
    </source>
</reference>
<protein>
    <recommendedName>
        <fullName>Putative carboxypeptidase YodJ</fullName>
        <ecNumber>3.4.-.-</ecNumber>
    </recommendedName>
</protein>
<feature type="signal peptide" evidence="1">
    <location>
        <begin position="1"/>
        <end position="23"/>
    </location>
</feature>
<feature type="chain" id="PRO_0000379984" description="Putative carboxypeptidase YodJ">
    <location>
        <begin position="24"/>
        <end position="273"/>
    </location>
</feature>
<feature type="region of interest" description="Disordered" evidence="2">
    <location>
        <begin position="27"/>
        <end position="58"/>
    </location>
</feature>
<feature type="compositionally biased region" description="Basic and acidic residues" evidence="2">
    <location>
        <begin position="31"/>
        <end position="53"/>
    </location>
</feature>
<feature type="lipid moiety-binding region" description="N-palmitoyl cysteine" evidence="1">
    <location>
        <position position="24"/>
    </location>
</feature>
<feature type="lipid moiety-binding region" description="S-diacylglycerol cysteine" evidence="1">
    <location>
        <position position="24"/>
    </location>
</feature>
<feature type="sequence conflict" description="In Ref. 1; AAB81165." evidence="3" ref="1">
    <original>Q</original>
    <variation>R</variation>
    <location>
        <position position="93"/>
    </location>
</feature>
<feature type="sequence conflict" description="In Ref. 1; AAB81165." evidence="3" ref="1">
    <original>E</original>
    <variation>D</variation>
    <location>
        <position position="126"/>
    </location>
</feature>
<feature type="helix" evidence="5">
    <location>
        <begin position="65"/>
        <end position="67"/>
    </location>
</feature>
<feature type="strand" evidence="5">
    <location>
        <begin position="71"/>
        <end position="74"/>
    </location>
</feature>
<feature type="strand" evidence="5">
    <location>
        <begin position="77"/>
        <end position="81"/>
    </location>
</feature>
<feature type="strand" evidence="5">
    <location>
        <begin position="91"/>
        <end position="93"/>
    </location>
</feature>
<feature type="strand" evidence="5">
    <location>
        <begin position="112"/>
        <end position="114"/>
    </location>
</feature>
<feature type="helix" evidence="5">
    <location>
        <begin position="119"/>
        <end position="121"/>
    </location>
</feature>
<feature type="helix" evidence="5">
    <location>
        <begin position="125"/>
        <end position="140"/>
    </location>
</feature>
<feature type="strand" evidence="5">
    <location>
        <begin position="145"/>
        <end position="149"/>
    </location>
</feature>
<feature type="helix" evidence="5">
    <location>
        <begin position="154"/>
        <end position="168"/>
    </location>
</feature>
<feature type="helix" evidence="5">
    <location>
        <begin position="170"/>
        <end position="176"/>
    </location>
</feature>
<feature type="helix" evidence="5">
    <location>
        <begin position="184"/>
        <end position="187"/>
    </location>
</feature>
<feature type="strand" evidence="5">
    <location>
        <begin position="190"/>
        <end position="195"/>
    </location>
</feature>
<feature type="helix" evidence="5">
    <location>
        <begin position="196"/>
        <end position="198"/>
    </location>
</feature>
<feature type="helix" evidence="5">
    <location>
        <begin position="204"/>
        <end position="208"/>
    </location>
</feature>
<feature type="helix" evidence="5">
    <location>
        <begin position="210"/>
        <end position="218"/>
    </location>
</feature>
<feature type="helix" evidence="5">
    <location>
        <begin position="219"/>
        <end position="222"/>
    </location>
</feature>
<feature type="strand" evidence="5">
    <location>
        <begin position="224"/>
        <end position="226"/>
    </location>
</feature>
<feature type="helix" evidence="5">
    <location>
        <begin position="233"/>
        <end position="236"/>
    </location>
</feature>
<feature type="strand" evidence="5">
    <location>
        <begin position="244"/>
        <end position="247"/>
    </location>
</feature>
<feature type="helix" evidence="5">
    <location>
        <begin position="250"/>
        <end position="258"/>
    </location>
</feature>
<feature type="helix" evidence="5">
    <location>
        <begin position="263"/>
        <end position="269"/>
    </location>
</feature>
<comment type="subcellular location">
    <subcellularLocation>
        <location evidence="4">Cell membrane</location>
        <topology evidence="4">Lipid-anchor</topology>
    </subcellularLocation>
</comment>
<comment type="similarity">
    <text evidence="3">Belongs to the peptidase M15B family.</text>
</comment>
<comment type="sequence caution" evidence="3">
    <conflict type="frameshift">
        <sequence resource="EMBL-CDS" id="AAB81165"/>
    </conflict>
</comment>
<dbReference type="EC" id="3.4.-.-"/>
<dbReference type="EMBL" id="AF015775">
    <property type="protein sequence ID" value="AAB72064.1"/>
    <property type="molecule type" value="Genomic_DNA"/>
</dbReference>
<dbReference type="EMBL" id="AF006665">
    <property type="protein sequence ID" value="AAB81165.1"/>
    <property type="status" value="ALT_FRAME"/>
    <property type="molecule type" value="Genomic_DNA"/>
</dbReference>
<dbReference type="EMBL" id="AL009126">
    <property type="protein sequence ID" value="CAB13853.1"/>
    <property type="molecule type" value="Genomic_DNA"/>
</dbReference>
<dbReference type="PIR" id="F69903">
    <property type="entry name" value="F69903"/>
</dbReference>
<dbReference type="PDB" id="4OX3">
    <property type="method" value="X-ray"/>
    <property type="resolution" value="2.00 A"/>
    <property type="chains" value="A=61-273"/>
</dbReference>
<dbReference type="PDBsum" id="4OX3"/>
<dbReference type="SMR" id="O34866"/>
<dbReference type="FunCoup" id="O34866">
    <property type="interactions" value="222"/>
</dbReference>
<dbReference type="STRING" id="224308.BSU19620"/>
<dbReference type="PaxDb" id="224308-BSU19620"/>
<dbReference type="DNASU" id="940023"/>
<dbReference type="EnsemblBacteria" id="CAB13853">
    <property type="protein sequence ID" value="CAB13853"/>
    <property type="gene ID" value="BSU_19620"/>
</dbReference>
<dbReference type="GeneID" id="940023"/>
<dbReference type="KEGG" id="bsu:BSU19620"/>
<dbReference type="PATRIC" id="fig|224308.179.peg.2145"/>
<dbReference type="eggNOG" id="COG1876">
    <property type="taxonomic scope" value="Bacteria"/>
</dbReference>
<dbReference type="InParanoid" id="O34866"/>
<dbReference type="OrthoDB" id="9792074at2"/>
<dbReference type="PhylomeDB" id="O34866"/>
<dbReference type="BioCyc" id="BSUB:BSU19620-MONOMER"/>
<dbReference type="EvolutionaryTrace" id="O34866"/>
<dbReference type="Proteomes" id="UP000001570">
    <property type="component" value="Chromosome"/>
</dbReference>
<dbReference type="GO" id="GO:0005886">
    <property type="term" value="C:plasma membrane"/>
    <property type="evidence" value="ECO:0007669"/>
    <property type="project" value="UniProtKB-SubCell"/>
</dbReference>
<dbReference type="GO" id="GO:0004180">
    <property type="term" value="F:carboxypeptidase activity"/>
    <property type="evidence" value="ECO:0007669"/>
    <property type="project" value="UniProtKB-KW"/>
</dbReference>
<dbReference type="GO" id="GO:0006508">
    <property type="term" value="P:proteolysis"/>
    <property type="evidence" value="ECO:0007669"/>
    <property type="project" value="UniProtKB-KW"/>
</dbReference>
<dbReference type="CDD" id="cd14852">
    <property type="entry name" value="LD-carboxypeptidase"/>
    <property type="match status" value="1"/>
</dbReference>
<dbReference type="Gene3D" id="3.30.1380.10">
    <property type="match status" value="1"/>
</dbReference>
<dbReference type="InterPro" id="IPR052179">
    <property type="entry name" value="Bact_PeptidoProc_Enz"/>
</dbReference>
<dbReference type="InterPro" id="IPR009045">
    <property type="entry name" value="Hedgehog_sig/DD-Pept_Zn-bd_sf"/>
</dbReference>
<dbReference type="InterPro" id="IPR003709">
    <property type="entry name" value="Pept_M15B"/>
</dbReference>
<dbReference type="PANTHER" id="PTHR34385">
    <property type="entry name" value="D-ALANYL-D-ALANINE CARBOXYPEPTIDASE"/>
    <property type="match status" value="1"/>
</dbReference>
<dbReference type="PANTHER" id="PTHR34385:SF1">
    <property type="entry name" value="PEPTIDOGLYCAN L-ALANYL-D-GLUTAMATE ENDOPEPTIDASE CWLK"/>
    <property type="match status" value="1"/>
</dbReference>
<dbReference type="Pfam" id="PF02557">
    <property type="entry name" value="VanY"/>
    <property type="match status" value="1"/>
</dbReference>
<dbReference type="SUPFAM" id="SSF55166">
    <property type="entry name" value="Hedgehog/DD-peptidase"/>
    <property type="match status" value="1"/>
</dbReference>
<dbReference type="PROSITE" id="PS51257">
    <property type="entry name" value="PROKAR_LIPOPROTEIN"/>
    <property type="match status" value="1"/>
</dbReference>
<organism>
    <name type="scientific">Bacillus subtilis (strain 168)</name>
    <dbReference type="NCBI Taxonomy" id="224308"/>
    <lineage>
        <taxon>Bacteria</taxon>
        <taxon>Bacillati</taxon>
        <taxon>Bacillota</taxon>
        <taxon>Bacilli</taxon>
        <taxon>Bacillales</taxon>
        <taxon>Bacillaceae</taxon>
        <taxon>Bacillus</taxon>
    </lineage>
</organism>
<evidence type="ECO:0000255" key="1">
    <source>
        <dbReference type="PROSITE-ProRule" id="PRU00303"/>
    </source>
</evidence>
<evidence type="ECO:0000256" key="2">
    <source>
        <dbReference type="SAM" id="MobiDB-lite"/>
    </source>
</evidence>
<evidence type="ECO:0000305" key="3"/>
<evidence type="ECO:0000305" key="4">
    <source>
    </source>
</evidence>
<evidence type="ECO:0007829" key="5">
    <source>
        <dbReference type="PDB" id="4OX3"/>
    </source>
</evidence>
<sequence length="273" mass="30854">MKKSGKWFSLAAALSVTAIVGAGCSMSNGDAQKDTKTTAETKQTEQKTADSKKSNTQNSEFSLESQYFNDIKKVDGLETIQNPENILALVNKQYALPGNYEPSDLVIPDVEFSFEEKIQKRYIRKEAADALKTMFDAAKKEGYELAAVSGYRSYDRQKVIFDNEVSLKGERKAKEAVAYPGESEHQTGLAMDISSRSNGFELNEAFGSTADGKWVQDNAYKYGFIIRYPKNKEDITKYEYEPWHLRYVGKKAAKVIQDNDLTLEEYFEKVKKI</sequence>
<gene>
    <name type="primary">yodJ</name>
    <name type="synonym">yokZ</name>
    <name type="ordered locus">BSU19620</name>
</gene>
<proteinExistence type="evidence at protein level"/>
<keyword id="KW-0002">3D-structure</keyword>
<keyword id="KW-0121">Carboxypeptidase</keyword>
<keyword id="KW-1003">Cell membrane</keyword>
<keyword id="KW-0378">Hydrolase</keyword>
<keyword id="KW-0449">Lipoprotein</keyword>
<keyword id="KW-0472">Membrane</keyword>
<keyword id="KW-0564">Palmitate</keyword>
<keyword id="KW-0645">Protease</keyword>
<keyword id="KW-1185">Reference proteome</keyword>
<keyword id="KW-0732">Signal</keyword>
<name>YODJ_BACSU</name>
<accession>O34866</accession>
<accession>O30473</accession>
<accession>Q796B6</accession>